<proteinExistence type="inferred from homology"/>
<feature type="chain" id="PRO_1000015101" description="Small ribosomal subunit protein uS10">
    <location>
        <begin position="1"/>
        <end position="105"/>
    </location>
</feature>
<gene>
    <name evidence="1" type="primary">rpsJ</name>
    <name type="ordered locus">A1E_04375</name>
</gene>
<protein>
    <recommendedName>
        <fullName evidence="1">Small ribosomal subunit protein uS10</fullName>
    </recommendedName>
    <alternativeName>
        <fullName evidence="2">30S ribosomal protein S10</fullName>
    </alternativeName>
</protein>
<organism>
    <name type="scientific">Rickettsia canadensis (strain McKiel)</name>
    <dbReference type="NCBI Taxonomy" id="293613"/>
    <lineage>
        <taxon>Bacteria</taxon>
        <taxon>Pseudomonadati</taxon>
        <taxon>Pseudomonadota</taxon>
        <taxon>Alphaproteobacteria</taxon>
        <taxon>Rickettsiales</taxon>
        <taxon>Rickettsiaceae</taxon>
        <taxon>Rickettsieae</taxon>
        <taxon>Rickettsia</taxon>
        <taxon>belli group</taxon>
    </lineage>
</organism>
<reference key="1">
    <citation type="submission" date="2007-09" db="EMBL/GenBank/DDBJ databases">
        <title>Complete genome sequence of Rickettsia canadensis.</title>
        <authorList>
            <person name="Madan A."/>
            <person name="Fahey J."/>
            <person name="Helton E."/>
            <person name="Ketteman M."/>
            <person name="Madan A."/>
            <person name="Rodrigues S."/>
            <person name="Sanchez A."/>
            <person name="Whiting M."/>
            <person name="Dasch G."/>
            <person name="Eremeeva M."/>
        </authorList>
    </citation>
    <scope>NUCLEOTIDE SEQUENCE [LARGE SCALE GENOMIC DNA]</scope>
    <source>
        <strain>McKiel</strain>
    </source>
</reference>
<keyword id="KW-0687">Ribonucleoprotein</keyword>
<keyword id="KW-0689">Ribosomal protein</keyword>
<comment type="function">
    <text evidence="1">Involved in the binding of tRNA to the ribosomes.</text>
</comment>
<comment type="subunit">
    <text evidence="1">Part of the 30S ribosomal subunit.</text>
</comment>
<comment type="similarity">
    <text evidence="1">Belongs to the universal ribosomal protein uS10 family.</text>
</comment>
<name>RS10_RICCK</name>
<evidence type="ECO:0000255" key="1">
    <source>
        <dbReference type="HAMAP-Rule" id="MF_00508"/>
    </source>
</evidence>
<evidence type="ECO:0000305" key="2"/>
<accession>A8EZL7</accession>
<dbReference type="EMBL" id="CP000409">
    <property type="protein sequence ID" value="ABV73800.1"/>
    <property type="molecule type" value="Genomic_DNA"/>
</dbReference>
<dbReference type="RefSeq" id="WP_012148995.1">
    <property type="nucleotide sequence ID" value="NC_009879.1"/>
</dbReference>
<dbReference type="SMR" id="A8EZL7"/>
<dbReference type="STRING" id="293613.A1E_04375"/>
<dbReference type="KEGG" id="rcm:A1E_04375"/>
<dbReference type="eggNOG" id="COG0051">
    <property type="taxonomic scope" value="Bacteria"/>
</dbReference>
<dbReference type="HOGENOM" id="CLU_122625_1_3_5"/>
<dbReference type="Proteomes" id="UP000007056">
    <property type="component" value="Chromosome"/>
</dbReference>
<dbReference type="GO" id="GO:1990904">
    <property type="term" value="C:ribonucleoprotein complex"/>
    <property type="evidence" value="ECO:0007669"/>
    <property type="project" value="UniProtKB-KW"/>
</dbReference>
<dbReference type="GO" id="GO:0005840">
    <property type="term" value="C:ribosome"/>
    <property type="evidence" value="ECO:0007669"/>
    <property type="project" value="UniProtKB-KW"/>
</dbReference>
<dbReference type="GO" id="GO:0003735">
    <property type="term" value="F:structural constituent of ribosome"/>
    <property type="evidence" value="ECO:0007669"/>
    <property type="project" value="InterPro"/>
</dbReference>
<dbReference type="GO" id="GO:0000049">
    <property type="term" value="F:tRNA binding"/>
    <property type="evidence" value="ECO:0007669"/>
    <property type="project" value="UniProtKB-UniRule"/>
</dbReference>
<dbReference type="GO" id="GO:0006412">
    <property type="term" value="P:translation"/>
    <property type="evidence" value="ECO:0007669"/>
    <property type="project" value="UniProtKB-UniRule"/>
</dbReference>
<dbReference type="FunFam" id="3.30.70.600:FF:000003">
    <property type="entry name" value="30S ribosomal protein S10"/>
    <property type="match status" value="1"/>
</dbReference>
<dbReference type="Gene3D" id="3.30.70.600">
    <property type="entry name" value="Ribosomal protein S10 domain"/>
    <property type="match status" value="1"/>
</dbReference>
<dbReference type="HAMAP" id="MF_00508">
    <property type="entry name" value="Ribosomal_uS10"/>
    <property type="match status" value="1"/>
</dbReference>
<dbReference type="InterPro" id="IPR001848">
    <property type="entry name" value="Ribosomal_uS10"/>
</dbReference>
<dbReference type="InterPro" id="IPR027486">
    <property type="entry name" value="Ribosomal_uS10_dom"/>
</dbReference>
<dbReference type="InterPro" id="IPR036838">
    <property type="entry name" value="Ribosomal_uS10_dom_sf"/>
</dbReference>
<dbReference type="NCBIfam" id="NF001861">
    <property type="entry name" value="PRK00596.1"/>
    <property type="match status" value="1"/>
</dbReference>
<dbReference type="NCBIfam" id="TIGR01049">
    <property type="entry name" value="rpsJ_bact"/>
    <property type="match status" value="1"/>
</dbReference>
<dbReference type="PANTHER" id="PTHR11700">
    <property type="entry name" value="30S RIBOSOMAL PROTEIN S10 FAMILY MEMBER"/>
    <property type="match status" value="1"/>
</dbReference>
<dbReference type="Pfam" id="PF00338">
    <property type="entry name" value="Ribosomal_S10"/>
    <property type="match status" value="1"/>
</dbReference>
<dbReference type="PRINTS" id="PR00971">
    <property type="entry name" value="RIBOSOMALS10"/>
</dbReference>
<dbReference type="SMART" id="SM01403">
    <property type="entry name" value="Ribosomal_S10"/>
    <property type="match status" value="1"/>
</dbReference>
<dbReference type="SUPFAM" id="SSF54999">
    <property type="entry name" value="Ribosomal protein S10"/>
    <property type="match status" value="1"/>
</dbReference>
<sequence>MKNKIKIRLKSFDHRILDQATKEIVSAIKRTFANINGPIPLPRKIERFTVNRSPHVHKKSREQFEIRKHKRLLVIDDPNPAVVDALSKVDLAAGVDVVIELESGE</sequence>